<dbReference type="EC" id="2.4.1.1"/>
<dbReference type="EMBL" id="L42023">
    <property type="protein sequence ID" value="AAC23008.1"/>
    <property type="molecule type" value="Genomic_DNA"/>
</dbReference>
<dbReference type="PIR" id="D64119">
    <property type="entry name" value="D64119"/>
</dbReference>
<dbReference type="RefSeq" id="NP_439512.1">
    <property type="nucleotide sequence ID" value="NC_000907.1"/>
</dbReference>
<dbReference type="SMR" id="P45180"/>
<dbReference type="STRING" id="71421.HI_1361"/>
<dbReference type="CAZy" id="GT35">
    <property type="family name" value="Glycosyltransferase Family 35"/>
</dbReference>
<dbReference type="EnsemblBacteria" id="AAC23008">
    <property type="protein sequence ID" value="AAC23008"/>
    <property type="gene ID" value="HI_1361"/>
</dbReference>
<dbReference type="KEGG" id="hin:HI_1361"/>
<dbReference type="PATRIC" id="fig|71421.8.peg.1415"/>
<dbReference type="eggNOG" id="COG0058">
    <property type="taxonomic scope" value="Bacteria"/>
</dbReference>
<dbReference type="HOGENOM" id="CLU_010198_1_1_6"/>
<dbReference type="OrthoDB" id="7229284at2"/>
<dbReference type="PhylomeDB" id="P45180"/>
<dbReference type="BioCyc" id="HINF71421:G1GJ1-1386-MONOMER"/>
<dbReference type="Proteomes" id="UP000000579">
    <property type="component" value="Chromosome"/>
</dbReference>
<dbReference type="GO" id="GO:0005737">
    <property type="term" value="C:cytoplasm"/>
    <property type="evidence" value="ECO:0000318"/>
    <property type="project" value="GO_Central"/>
</dbReference>
<dbReference type="GO" id="GO:0008184">
    <property type="term" value="F:glycogen phosphorylase activity"/>
    <property type="evidence" value="ECO:0000318"/>
    <property type="project" value="GO_Central"/>
</dbReference>
<dbReference type="GO" id="GO:0030170">
    <property type="term" value="F:pyridoxal phosphate binding"/>
    <property type="evidence" value="ECO:0000318"/>
    <property type="project" value="GO_Central"/>
</dbReference>
<dbReference type="GO" id="GO:0005980">
    <property type="term" value="P:glycogen catabolic process"/>
    <property type="evidence" value="ECO:0000318"/>
    <property type="project" value="GO_Central"/>
</dbReference>
<dbReference type="CDD" id="cd04300">
    <property type="entry name" value="GT35_Glycogen_Phosphorylase"/>
    <property type="match status" value="1"/>
</dbReference>
<dbReference type="FunFam" id="3.40.50.2000:FF:000003">
    <property type="entry name" value="Alpha-1,4 glucan phosphorylase"/>
    <property type="match status" value="1"/>
</dbReference>
<dbReference type="FunFam" id="3.40.50.2000:FF:000034">
    <property type="entry name" value="Alpha-1,4 glucan phosphorylase"/>
    <property type="match status" value="1"/>
</dbReference>
<dbReference type="Gene3D" id="3.40.50.2000">
    <property type="entry name" value="Glycogen Phosphorylase B"/>
    <property type="match status" value="2"/>
</dbReference>
<dbReference type="InterPro" id="IPR011833">
    <property type="entry name" value="Glycg_phsphrylas"/>
</dbReference>
<dbReference type="InterPro" id="IPR000811">
    <property type="entry name" value="Glyco_trans_35"/>
</dbReference>
<dbReference type="InterPro" id="IPR035090">
    <property type="entry name" value="Pyridoxal_P_attach_site"/>
</dbReference>
<dbReference type="NCBIfam" id="TIGR02093">
    <property type="entry name" value="P_ylase"/>
    <property type="match status" value="1"/>
</dbReference>
<dbReference type="PANTHER" id="PTHR11468">
    <property type="entry name" value="GLYCOGEN PHOSPHORYLASE"/>
    <property type="match status" value="1"/>
</dbReference>
<dbReference type="PANTHER" id="PTHR11468:SF3">
    <property type="entry name" value="GLYCOGEN PHOSPHORYLASE, LIVER FORM"/>
    <property type="match status" value="1"/>
</dbReference>
<dbReference type="Pfam" id="PF00343">
    <property type="entry name" value="Phosphorylase"/>
    <property type="match status" value="1"/>
</dbReference>
<dbReference type="PIRSF" id="PIRSF000460">
    <property type="entry name" value="Pprylas_GlgP"/>
    <property type="match status" value="1"/>
</dbReference>
<dbReference type="SUPFAM" id="SSF53756">
    <property type="entry name" value="UDP-Glycosyltransferase/glycogen phosphorylase"/>
    <property type="match status" value="1"/>
</dbReference>
<dbReference type="PROSITE" id="PS00102">
    <property type="entry name" value="PHOSPHORYLASE"/>
    <property type="match status" value="1"/>
</dbReference>
<reference key="1">
    <citation type="journal article" date="1995" name="Science">
        <title>Whole-genome random sequencing and assembly of Haemophilus influenzae Rd.</title>
        <authorList>
            <person name="Fleischmann R.D."/>
            <person name="Adams M.D."/>
            <person name="White O."/>
            <person name="Clayton R.A."/>
            <person name="Kirkness E.F."/>
            <person name="Kerlavage A.R."/>
            <person name="Bult C.J."/>
            <person name="Tomb J.-F."/>
            <person name="Dougherty B.A."/>
            <person name="Merrick J.M."/>
            <person name="McKenney K."/>
            <person name="Sutton G.G."/>
            <person name="FitzHugh W."/>
            <person name="Fields C.A."/>
            <person name="Gocayne J.D."/>
            <person name="Scott J.D."/>
            <person name="Shirley R."/>
            <person name="Liu L.-I."/>
            <person name="Glodek A."/>
            <person name="Kelley J.M."/>
            <person name="Weidman J.F."/>
            <person name="Phillips C.A."/>
            <person name="Spriggs T."/>
            <person name="Hedblom E."/>
            <person name="Cotton M.D."/>
            <person name="Utterback T.R."/>
            <person name="Hanna M.C."/>
            <person name="Nguyen D.T."/>
            <person name="Saudek D.M."/>
            <person name="Brandon R.C."/>
            <person name="Fine L.D."/>
            <person name="Fritchman J.L."/>
            <person name="Fuhrmann J.L."/>
            <person name="Geoghagen N.S.M."/>
            <person name="Gnehm C.L."/>
            <person name="McDonald L.A."/>
            <person name="Small K.V."/>
            <person name="Fraser C.M."/>
            <person name="Smith H.O."/>
            <person name="Venter J.C."/>
        </authorList>
    </citation>
    <scope>NUCLEOTIDE SEQUENCE [LARGE SCALE GENOMIC DNA]</scope>
    <source>
        <strain>ATCC 51907 / DSM 11121 / KW20 / Rd</strain>
    </source>
</reference>
<protein>
    <recommendedName>
        <fullName>Glycogen phosphorylase</fullName>
        <ecNumber>2.4.1.1</ecNumber>
    </recommendedName>
</protein>
<keyword id="KW-0021">Allosteric enzyme</keyword>
<keyword id="KW-0119">Carbohydrate metabolism</keyword>
<keyword id="KW-0321">Glycogen metabolism</keyword>
<keyword id="KW-0328">Glycosyltransferase</keyword>
<keyword id="KW-0663">Pyridoxal phosphate</keyword>
<keyword id="KW-1185">Reference proteome</keyword>
<keyword id="KW-0808">Transferase</keyword>
<feature type="chain" id="PRO_0000188554" description="Glycogen phosphorylase">
    <location>
        <begin position="1"/>
        <end position="821"/>
    </location>
</feature>
<feature type="modified residue" description="N6-(pyridoxal phosphate)lysine" evidence="1">
    <location>
        <position position="667"/>
    </location>
</feature>
<sequence length="821" mass="94441">MIMDNFDSPFQYNRPEMTVEAIKKSIVYKLIFLIGRSPREASQRDWLNATLHAVRDLVTEGWITTARQTRAEDSRRVYYLSMEFLIGRTLSNAMIAEGIYGLAQEALSELNVDLEEVLEKEVDPGLGNGGLGRLAACFMDSIATLGLPGMGYGIRYEYGMFRQKIENGQQVERPDAWLEKGAPWEFIRPSKRFTVEFGGNIHFEGKKCIWQDTEKVTALAYDQMIPGYQNNSAATLRLWSAHAGEVFNLADFNRGEHLAALEEHSANKNLSRVLYPDDSTWNGRELRLRQEYFLVSASLQDILRRHKRTHNSLENLADKVAIHLNDTHPALAIPELMRILVDDEGFEWKKAWEMTRNIFSYTCHTLMSEALETWPVEMMAKILPRHLQMIFEINDHFLEYVRTYVTTDNDFIRRVSLIEEGYQRKVRMGWLSVVGSHKINGVAEIHSDLMVTSTFADFARIFPERFTNVTNGITPRRWLAVANPQLAALFDKYIGSEWRCDLSQIEKLKPFAQEKAFKEAVADIKFANKVKLAEYVKSELGVELDPHALFDVQVKRIHEYKRQMLNVLHIIARYNEMLTNPEKDWQPRVFILAGKAASAYYAAKQTIHLINDVANVINNDERLKGRLKVVFIPNYSVSLAQLIIPAADISEQISLAGTEASGTSNMKFALNGALTLGTLDGANVEILENVGEDNIFIFGNTVEQVEQLRREGYRSFEYYQNDAQLRTVVDQIIEGKFSPEDPQRYHQLLQGLQYHDYYQAFADFRSYVETQKAVDEKYKQRDQWIESTIQNIVNMGFFSSDRTIKEYAERIWKVEPVQLGD</sequence>
<evidence type="ECO:0000250" key="1"/>
<evidence type="ECO:0000305" key="2"/>
<name>PHSG_HAEIN</name>
<gene>
    <name type="primary">glgP</name>
    <name type="ordered locus">HI_1361</name>
</gene>
<organism>
    <name type="scientific">Haemophilus influenzae (strain ATCC 51907 / DSM 11121 / KW20 / Rd)</name>
    <dbReference type="NCBI Taxonomy" id="71421"/>
    <lineage>
        <taxon>Bacteria</taxon>
        <taxon>Pseudomonadati</taxon>
        <taxon>Pseudomonadota</taxon>
        <taxon>Gammaproteobacteria</taxon>
        <taxon>Pasteurellales</taxon>
        <taxon>Pasteurellaceae</taxon>
        <taxon>Haemophilus</taxon>
    </lineage>
</organism>
<proteinExistence type="inferred from homology"/>
<comment type="function">
    <text evidence="1">Phosphorylase is an important allosteric enzyme in carbohydrate metabolism. Enzymes from different sources differ in their regulatory mechanisms and in their natural substrates. However, all known phosphorylases share catalytic and structural properties (By similarity).</text>
</comment>
<comment type="catalytic activity">
    <reaction>
        <text>[(1-&gt;4)-alpha-D-glucosyl](n) + phosphate = [(1-&gt;4)-alpha-D-glucosyl](n-1) + alpha-D-glucose 1-phosphate</text>
        <dbReference type="Rhea" id="RHEA:41732"/>
        <dbReference type="Rhea" id="RHEA-COMP:9584"/>
        <dbReference type="Rhea" id="RHEA-COMP:9586"/>
        <dbReference type="ChEBI" id="CHEBI:15444"/>
        <dbReference type="ChEBI" id="CHEBI:43474"/>
        <dbReference type="ChEBI" id="CHEBI:58601"/>
        <dbReference type="EC" id="2.4.1.1"/>
    </reaction>
</comment>
<comment type="cofactor">
    <cofactor evidence="1">
        <name>pyridoxal 5'-phosphate</name>
        <dbReference type="ChEBI" id="CHEBI:597326"/>
    </cofactor>
</comment>
<comment type="similarity">
    <text evidence="2">Belongs to the glycogen phosphorylase family.</text>
</comment>
<accession>P45180</accession>